<sequence length="250" mass="28556">MAVTKLVLVRHGESQWNKENRFTGWYDVDLSEKGVSEAKAAGKLLKEEGYSFDFAYTSVLKRAIHTLWNVLDELDQAWLPVEKSWKLNERHYGALQGLNKAETAEKYGDEQVKQWRRGFAVTPPELTKDDERYPGHDPRYAKLSEKELPLTESLALTIDRVIPYWNETILPRMKSGERVIIAAHGNSLRALVKYLDNMSEEEILELNIPTGVPLVYEFDENFKPLKRYYLGNADEIAAKAAAVANQGKAK</sequence>
<accession>P62709</accession>
<accession>P31217</accession>
<proteinExistence type="inferred from homology"/>
<name>GPMA_ECO57</name>
<keyword id="KW-0312">Gluconeogenesis</keyword>
<keyword id="KW-0324">Glycolysis</keyword>
<keyword id="KW-0413">Isomerase</keyword>
<keyword id="KW-1185">Reference proteome</keyword>
<organism>
    <name type="scientific">Escherichia coli O157:H7</name>
    <dbReference type="NCBI Taxonomy" id="83334"/>
    <lineage>
        <taxon>Bacteria</taxon>
        <taxon>Pseudomonadati</taxon>
        <taxon>Pseudomonadota</taxon>
        <taxon>Gammaproteobacteria</taxon>
        <taxon>Enterobacterales</taxon>
        <taxon>Enterobacteriaceae</taxon>
        <taxon>Escherichia</taxon>
    </lineage>
</organism>
<reference key="1">
    <citation type="journal article" date="2001" name="Nature">
        <title>Genome sequence of enterohaemorrhagic Escherichia coli O157:H7.</title>
        <authorList>
            <person name="Perna N.T."/>
            <person name="Plunkett G. III"/>
            <person name="Burland V."/>
            <person name="Mau B."/>
            <person name="Glasner J.D."/>
            <person name="Rose D.J."/>
            <person name="Mayhew G.F."/>
            <person name="Evans P.S."/>
            <person name="Gregor J."/>
            <person name="Kirkpatrick H.A."/>
            <person name="Posfai G."/>
            <person name="Hackett J."/>
            <person name="Klink S."/>
            <person name="Boutin A."/>
            <person name="Shao Y."/>
            <person name="Miller L."/>
            <person name="Grotbeck E.J."/>
            <person name="Davis N.W."/>
            <person name="Lim A."/>
            <person name="Dimalanta E.T."/>
            <person name="Potamousis K."/>
            <person name="Apodaca J."/>
            <person name="Anantharaman T.S."/>
            <person name="Lin J."/>
            <person name="Yen G."/>
            <person name="Schwartz D.C."/>
            <person name="Welch R.A."/>
            <person name="Blattner F.R."/>
        </authorList>
    </citation>
    <scope>NUCLEOTIDE SEQUENCE [LARGE SCALE GENOMIC DNA]</scope>
    <source>
        <strain>O157:H7 / EDL933 / ATCC 700927 / EHEC</strain>
    </source>
</reference>
<reference key="2">
    <citation type="journal article" date="2001" name="DNA Res.">
        <title>Complete genome sequence of enterohemorrhagic Escherichia coli O157:H7 and genomic comparison with a laboratory strain K-12.</title>
        <authorList>
            <person name="Hayashi T."/>
            <person name="Makino K."/>
            <person name="Ohnishi M."/>
            <person name="Kurokawa K."/>
            <person name="Ishii K."/>
            <person name="Yokoyama K."/>
            <person name="Han C.-G."/>
            <person name="Ohtsubo E."/>
            <person name="Nakayama K."/>
            <person name="Murata T."/>
            <person name="Tanaka M."/>
            <person name="Tobe T."/>
            <person name="Iida T."/>
            <person name="Takami H."/>
            <person name="Honda T."/>
            <person name="Sasakawa C."/>
            <person name="Ogasawara N."/>
            <person name="Yasunaga T."/>
            <person name="Kuhara S."/>
            <person name="Shiba T."/>
            <person name="Hattori M."/>
            <person name="Shinagawa H."/>
        </authorList>
    </citation>
    <scope>NUCLEOTIDE SEQUENCE [LARGE SCALE GENOMIC DNA]</scope>
    <source>
        <strain>O157:H7 / Sakai / RIMD 0509952 / EHEC</strain>
    </source>
</reference>
<dbReference type="EC" id="5.4.2.11" evidence="2"/>
<dbReference type="EMBL" id="AE005174">
    <property type="protein sequence ID" value="AAG55084.1"/>
    <property type="molecule type" value="Genomic_DNA"/>
</dbReference>
<dbReference type="EMBL" id="BA000007">
    <property type="protein sequence ID" value="BAB34206.1"/>
    <property type="molecule type" value="Genomic_DNA"/>
</dbReference>
<dbReference type="PIR" id="G90726">
    <property type="entry name" value="G90726"/>
</dbReference>
<dbReference type="PIR" id="H85577">
    <property type="entry name" value="H85577"/>
</dbReference>
<dbReference type="RefSeq" id="NP_308810.1">
    <property type="nucleotide sequence ID" value="NC_002695.1"/>
</dbReference>
<dbReference type="RefSeq" id="WP_001295305.1">
    <property type="nucleotide sequence ID" value="NZ_VOAI01000019.1"/>
</dbReference>
<dbReference type="SMR" id="P62709"/>
<dbReference type="STRING" id="155864.Z0925"/>
<dbReference type="GeneID" id="917517"/>
<dbReference type="GeneID" id="93776726"/>
<dbReference type="KEGG" id="ece:Z0925"/>
<dbReference type="KEGG" id="ecs:ECs_0783"/>
<dbReference type="PATRIC" id="fig|386585.9.peg.902"/>
<dbReference type="eggNOG" id="COG0588">
    <property type="taxonomic scope" value="Bacteria"/>
</dbReference>
<dbReference type="HOGENOM" id="CLU_033323_1_1_6"/>
<dbReference type="OMA" id="MLPYWYD"/>
<dbReference type="UniPathway" id="UPA00109">
    <property type="reaction ID" value="UER00186"/>
</dbReference>
<dbReference type="Proteomes" id="UP000000558">
    <property type="component" value="Chromosome"/>
</dbReference>
<dbReference type="Proteomes" id="UP000002519">
    <property type="component" value="Chromosome"/>
</dbReference>
<dbReference type="GO" id="GO:0004619">
    <property type="term" value="F:phosphoglycerate mutase activity"/>
    <property type="evidence" value="ECO:0007669"/>
    <property type="project" value="UniProtKB-EC"/>
</dbReference>
<dbReference type="GO" id="GO:0006094">
    <property type="term" value="P:gluconeogenesis"/>
    <property type="evidence" value="ECO:0007669"/>
    <property type="project" value="UniProtKB-UniRule"/>
</dbReference>
<dbReference type="GO" id="GO:0006096">
    <property type="term" value="P:glycolytic process"/>
    <property type="evidence" value="ECO:0007669"/>
    <property type="project" value="UniProtKB-UniRule"/>
</dbReference>
<dbReference type="CDD" id="cd07067">
    <property type="entry name" value="HP_PGM_like"/>
    <property type="match status" value="1"/>
</dbReference>
<dbReference type="FunFam" id="3.40.50.1240:FF:000003">
    <property type="entry name" value="2,3-bisphosphoglycerate-dependent phosphoglycerate mutase"/>
    <property type="match status" value="1"/>
</dbReference>
<dbReference type="Gene3D" id="3.40.50.1240">
    <property type="entry name" value="Phosphoglycerate mutase-like"/>
    <property type="match status" value="1"/>
</dbReference>
<dbReference type="HAMAP" id="MF_01039">
    <property type="entry name" value="PGAM_GpmA"/>
    <property type="match status" value="1"/>
</dbReference>
<dbReference type="InterPro" id="IPR013078">
    <property type="entry name" value="His_Pase_superF_clade-1"/>
</dbReference>
<dbReference type="InterPro" id="IPR029033">
    <property type="entry name" value="His_PPase_superfam"/>
</dbReference>
<dbReference type="InterPro" id="IPR001345">
    <property type="entry name" value="PG/BPGM_mutase_AS"/>
</dbReference>
<dbReference type="InterPro" id="IPR005952">
    <property type="entry name" value="Phosphogly_mut1"/>
</dbReference>
<dbReference type="NCBIfam" id="TIGR01258">
    <property type="entry name" value="pgm_1"/>
    <property type="match status" value="1"/>
</dbReference>
<dbReference type="NCBIfam" id="NF010713">
    <property type="entry name" value="PRK14115.1"/>
    <property type="match status" value="1"/>
</dbReference>
<dbReference type="PANTHER" id="PTHR11931">
    <property type="entry name" value="PHOSPHOGLYCERATE MUTASE"/>
    <property type="match status" value="1"/>
</dbReference>
<dbReference type="Pfam" id="PF00300">
    <property type="entry name" value="His_Phos_1"/>
    <property type="match status" value="1"/>
</dbReference>
<dbReference type="PIRSF" id="PIRSF000709">
    <property type="entry name" value="6PFK_2-Ptase"/>
    <property type="match status" value="1"/>
</dbReference>
<dbReference type="SMART" id="SM00855">
    <property type="entry name" value="PGAM"/>
    <property type="match status" value="1"/>
</dbReference>
<dbReference type="SUPFAM" id="SSF53254">
    <property type="entry name" value="Phosphoglycerate mutase-like"/>
    <property type="match status" value="1"/>
</dbReference>
<dbReference type="PROSITE" id="PS00175">
    <property type="entry name" value="PG_MUTASE"/>
    <property type="match status" value="1"/>
</dbReference>
<feature type="initiator methionine" description="Removed" evidence="1">
    <location>
        <position position="1"/>
    </location>
</feature>
<feature type="chain" id="PRO_0000179874" description="2,3-bisphosphoglycerate-dependent phosphoglycerate mutase">
    <location>
        <begin position="2"/>
        <end position="250"/>
    </location>
</feature>
<feature type="active site" description="Tele-phosphohistidine intermediate" evidence="2">
    <location>
        <position position="11"/>
    </location>
</feature>
<feature type="active site" description="Proton donor/acceptor" evidence="2">
    <location>
        <position position="89"/>
    </location>
</feature>
<feature type="binding site" evidence="2">
    <location>
        <begin position="10"/>
        <end position="17"/>
    </location>
    <ligand>
        <name>substrate</name>
    </ligand>
</feature>
<feature type="binding site" evidence="2">
    <location>
        <begin position="23"/>
        <end position="24"/>
    </location>
    <ligand>
        <name>substrate</name>
    </ligand>
</feature>
<feature type="binding site" evidence="2">
    <location>
        <position position="62"/>
    </location>
    <ligand>
        <name>substrate</name>
    </ligand>
</feature>
<feature type="binding site" evidence="2">
    <location>
        <begin position="89"/>
        <end position="92"/>
    </location>
    <ligand>
        <name>substrate</name>
    </ligand>
</feature>
<feature type="binding site" evidence="2">
    <location>
        <position position="100"/>
    </location>
    <ligand>
        <name>substrate</name>
    </ligand>
</feature>
<feature type="binding site" evidence="2">
    <location>
        <begin position="116"/>
        <end position="117"/>
    </location>
    <ligand>
        <name>substrate</name>
    </ligand>
</feature>
<feature type="binding site" evidence="2">
    <location>
        <begin position="185"/>
        <end position="186"/>
    </location>
    <ligand>
        <name>substrate</name>
    </ligand>
</feature>
<feature type="site" description="Transition state stabilizer" evidence="2">
    <location>
        <position position="184"/>
    </location>
</feature>
<protein>
    <recommendedName>
        <fullName evidence="2">2,3-bisphosphoglycerate-dependent phosphoglycerate mutase</fullName>
        <shortName evidence="2">BPG-dependent PGAM</shortName>
        <shortName evidence="2">PGAM</shortName>
        <shortName evidence="2">Phosphoglyceromutase</shortName>
        <shortName evidence="2">dPGM</shortName>
        <ecNumber evidence="2">5.4.2.11</ecNumber>
    </recommendedName>
</protein>
<gene>
    <name evidence="2" type="primary">gpmA</name>
    <name type="synonym">gpm</name>
    <name type="synonym">pgm</name>
    <name type="synonym">pgmA</name>
    <name type="ordered locus">Z0925</name>
    <name type="ordered locus">ECs0783</name>
</gene>
<comment type="function">
    <text evidence="2">Catalyzes the interconversion of 2-phosphoglycerate and 3-phosphoglycerate.</text>
</comment>
<comment type="catalytic activity">
    <reaction evidence="2">
        <text>(2R)-2-phosphoglycerate = (2R)-3-phosphoglycerate</text>
        <dbReference type="Rhea" id="RHEA:15901"/>
        <dbReference type="ChEBI" id="CHEBI:58272"/>
        <dbReference type="ChEBI" id="CHEBI:58289"/>
        <dbReference type="EC" id="5.4.2.11"/>
    </reaction>
</comment>
<comment type="pathway">
    <text evidence="2">Carbohydrate degradation; glycolysis; pyruvate from D-glyceraldehyde 3-phosphate: step 3/5.</text>
</comment>
<comment type="subunit">
    <text evidence="2">Homodimer.</text>
</comment>
<comment type="similarity">
    <text evidence="2">Belongs to the phosphoglycerate mutase family. BPG-dependent PGAM subfamily.</text>
</comment>
<evidence type="ECO:0000250" key="1"/>
<evidence type="ECO:0000255" key="2">
    <source>
        <dbReference type="HAMAP-Rule" id="MF_01039"/>
    </source>
</evidence>